<reference key="1">
    <citation type="submission" date="2007-03" db="EMBL/GenBank/DDBJ databases">
        <title>Genome sequence of Rhodospirillum centenum.</title>
        <authorList>
            <person name="Touchman J.W."/>
            <person name="Bauer C."/>
            <person name="Blankenship R.E."/>
        </authorList>
    </citation>
    <scope>NUCLEOTIDE SEQUENCE [LARGE SCALE GENOMIC DNA]</scope>
    <source>
        <strain>ATCC 51521 / SW</strain>
    </source>
</reference>
<feature type="chain" id="PRO_1000094714" description="UDP-N-acetylglucosamine 1-carboxyvinyltransferase">
    <location>
        <begin position="1"/>
        <end position="432"/>
    </location>
</feature>
<feature type="active site" description="Proton donor" evidence="1">
    <location>
        <position position="126"/>
    </location>
</feature>
<feature type="binding site" evidence="1">
    <location>
        <begin position="22"/>
        <end position="23"/>
    </location>
    <ligand>
        <name>phosphoenolpyruvate</name>
        <dbReference type="ChEBI" id="CHEBI:58702"/>
    </ligand>
</feature>
<feature type="binding site" evidence="1">
    <location>
        <position position="102"/>
    </location>
    <ligand>
        <name>UDP-N-acetyl-alpha-D-glucosamine</name>
        <dbReference type="ChEBI" id="CHEBI:57705"/>
    </ligand>
</feature>
<feature type="binding site" evidence="1">
    <location>
        <begin position="131"/>
        <end position="135"/>
    </location>
    <ligand>
        <name>UDP-N-acetyl-alpha-D-glucosamine</name>
        <dbReference type="ChEBI" id="CHEBI:57705"/>
    </ligand>
</feature>
<feature type="binding site" evidence="1">
    <location>
        <position position="317"/>
    </location>
    <ligand>
        <name>UDP-N-acetyl-alpha-D-glucosamine</name>
        <dbReference type="ChEBI" id="CHEBI:57705"/>
    </ligand>
</feature>
<feature type="binding site" evidence="1">
    <location>
        <position position="339"/>
    </location>
    <ligand>
        <name>UDP-N-acetyl-alpha-D-glucosamine</name>
        <dbReference type="ChEBI" id="CHEBI:57705"/>
    </ligand>
</feature>
<feature type="modified residue" description="2-(S-cysteinyl)pyruvic acid O-phosphothioketal" evidence="1">
    <location>
        <position position="126"/>
    </location>
</feature>
<accession>B6INF7</accession>
<organism>
    <name type="scientific">Rhodospirillum centenum (strain ATCC 51521 / SW)</name>
    <dbReference type="NCBI Taxonomy" id="414684"/>
    <lineage>
        <taxon>Bacteria</taxon>
        <taxon>Pseudomonadati</taxon>
        <taxon>Pseudomonadota</taxon>
        <taxon>Alphaproteobacteria</taxon>
        <taxon>Rhodospirillales</taxon>
        <taxon>Rhodospirillaceae</taxon>
        <taxon>Rhodospirillum</taxon>
    </lineage>
</organism>
<gene>
    <name evidence="1" type="primary">murA</name>
    <name type="ordered locus">RC1_1653</name>
</gene>
<protein>
    <recommendedName>
        <fullName evidence="1">UDP-N-acetylglucosamine 1-carboxyvinyltransferase</fullName>
        <ecNumber evidence="1">2.5.1.7</ecNumber>
    </recommendedName>
    <alternativeName>
        <fullName evidence="1">Enoylpyruvate transferase</fullName>
    </alternativeName>
    <alternativeName>
        <fullName evidence="1">UDP-N-acetylglucosamine enolpyruvyl transferase</fullName>
        <shortName evidence="1">EPT</shortName>
    </alternativeName>
</protein>
<proteinExistence type="inferred from homology"/>
<comment type="function">
    <text evidence="1">Cell wall formation. Adds enolpyruvyl to UDP-N-acetylglucosamine.</text>
</comment>
<comment type="catalytic activity">
    <reaction evidence="1">
        <text>phosphoenolpyruvate + UDP-N-acetyl-alpha-D-glucosamine = UDP-N-acetyl-3-O-(1-carboxyvinyl)-alpha-D-glucosamine + phosphate</text>
        <dbReference type="Rhea" id="RHEA:18681"/>
        <dbReference type="ChEBI" id="CHEBI:43474"/>
        <dbReference type="ChEBI" id="CHEBI:57705"/>
        <dbReference type="ChEBI" id="CHEBI:58702"/>
        <dbReference type="ChEBI" id="CHEBI:68483"/>
        <dbReference type="EC" id="2.5.1.7"/>
    </reaction>
</comment>
<comment type="pathway">
    <text evidence="1">Cell wall biogenesis; peptidoglycan biosynthesis.</text>
</comment>
<comment type="subcellular location">
    <subcellularLocation>
        <location evidence="1">Cytoplasm</location>
    </subcellularLocation>
</comment>
<comment type="similarity">
    <text evidence="1">Belongs to the EPSP synthase family. MurA subfamily.</text>
</comment>
<sequence length="432" mass="45170">MDKLRIRGGRPLKGSIPISGAKNAALPLMAACLLTDGTLTLANLPHLADITTMANLLAQHGVDIRLNGHAQGGGGSQGRVVELTAATIASTTAPYDLVRKMRASVLVLGPLLARCGQAKVSLPGGCAIGPRPVDLHIKGLQAMGASIEIDGGYVIASAPAGGLRGAEIVFPQVSVGATENLMMAAALAKGETLLVNAAREPEITDLAHCLIAMGAEIEGAGTDRIRIRGRDRLSGAHHTIIPDRIETGTFAMAAAITGGEVELVGARLEHIKSVAKILSGAEIDFEETEAGLRVRRRNGVLLGVDVMTEPFPGFPTDLQAQMMALMCTCTGAAMITESIFENRFMHVPELARMGANITVHGASALVRGVPRLTGAPVMATDLRASVSLVIAGLAAAGETVVNRIYHLDRGYERIEEKLVACGADMERVRETD</sequence>
<evidence type="ECO:0000255" key="1">
    <source>
        <dbReference type="HAMAP-Rule" id="MF_00111"/>
    </source>
</evidence>
<dbReference type="EC" id="2.5.1.7" evidence="1"/>
<dbReference type="EMBL" id="CP000613">
    <property type="protein sequence ID" value="ACI99054.1"/>
    <property type="molecule type" value="Genomic_DNA"/>
</dbReference>
<dbReference type="RefSeq" id="WP_012566839.1">
    <property type="nucleotide sequence ID" value="NC_011420.2"/>
</dbReference>
<dbReference type="SMR" id="B6INF7"/>
<dbReference type="STRING" id="414684.RC1_1653"/>
<dbReference type="KEGG" id="rce:RC1_1653"/>
<dbReference type="eggNOG" id="COG0766">
    <property type="taxonomic scope" value="Bacteria"/>
</dbReference>
<dbReference type="HOGENOM" id="CLU_027387_0_0_5"/>
<dbReference type="OrthoDB" id="9803760at2"/>
<dbReference type="UniPathway" id="UPA00219"/>
<dbReference type="Proteomes" id="UP000001591">
    <property type="component" value="Chromosome"/>
</dbReference>
<dbReference type="GO" id="GO:0005737">
    <property type="term" value="C:cytoplasm"/>
    <property type="evidence" value="ECO:0007669"/>
    <property type="project" value="UniProtKB-SubCell"/>
</dbReference>
<dbReference type="GO" id="GO:0008760">
    <property type="term" value="F:UDP-N-acetylglucosamine 1-carboxyvinyltransferase activity"/>
    <property type="evidence" value="ECO:0007669"/>
    <property type="project" value="UniProtKB-UniRule"/>
</dbReference>
<dbReference type="GO" id="GO:0051301">
    <property type="term" value="P:cell division"/>
    <property type="evidence" value="ECO:0007669"/>
    <property type="project" value="UniProtKB-KW"/>
</dbReference>
<dbReference type="GO" id="GO:0071555">
    <property type="term" value="P:cell wall organization"/>
    <property type="evidence" value="ECO:0007669"/>
    <property type="project" value="UniProtKB-KW"/>
</dbReference>
<dbReference type="GO" id="GO:0009252">
    <property type="term" value="P:peptidoglycan biosynthetic process"/>
    <property type="evidence" value="ECO:0007669"/>
    <property type="project" value="UniProtKB-UniRule"/>
</dbReference>
<dbReference type="GO" id="GO:0008360">
    <property type="term" value="P:regulation of cell shape"/>
    <property type="evidence" value="ECO:0007669"/>
    <property type="project" value="UniProtKB-KW"/>
</dbReference>
<dbReference type="GO" id="GO:0019277">
    <property type="term" value="P:UDP-N-acetylgalactosamine biosynthetic process"/>
    <property type="evidence" value="ECO:0007669"/>
    <property type="project" value="InterPro"/>
</dbReference>
<dbReference type="CDD" id="cd01555">
    <property type="entry name" value="UdpNAET"/>
    <property type="match status" value="1"/>
</dbReference>
<dbReference type="FunFam" id="3.65.10.10:FF:000001">
    <property type="entry name" value="UDP-N-acetylglucosamine 1-carboxyvinyltransferase"/>
    <property type="match status" value="1"/>
</dbReference>
<dbReference type="Gene3D" id="3.65.10.10">
    <property type="entry name" value="Enolpyruvate transferase domain"/>
    <property type="match status" value="2"/>
</dbReference>
<dbReference type="HAMAP" id="MF_00111">
    <property type="entry name" value="MurA"/>
    <property type="match status" value="1"/>
</dbReference>
<dbReference type="InterPro" id="IPR001986">
    <property type="entry name" value="Enolpyruvate_Tfrase_dom"/>
</dbReference>
<dbReference type="InterPro" id="IPR036968">
    <property type="entry name" value="Enolpyruvate_Tfrase_sf"/>
</dbReference>
<dbReference type="InterPro" id="IPR050068">
    <property type="entry name" value="MurA_subfamily"/>
</dbReference>
<dbReference type="InterPro" id="IPR013792">
    <property type="entry name" value="RNA3'P_cycl/enolpyr_Trfase_a/b"/>
</dbReference>
<dbReference type="InterPro" id="IPR005750">
    <property type="entry name" value="UDP_GlcNAc_COvinyl_MurA"/>
</dbReference>
<dbReference type="NCBIfam" id="TIGR01072">
    <property type="entry name" value="murA"/>
    <property type="match status" value="1"/>
</dbReference>
<dbReference type="NCBIfam" id="NF006873">
    <property type="entry name" value="PRK09369.1"/>
    <property type="match status" value="1"/>
</dbReference>
<dbReference type="PANTHER" id="PTHR43783">
    <property type="entry name" value="UDP-N-ACETYLGLUCOSAMINE 1-CARBOXYVINYLTRANSFERASE"/>
    <property type="match status" value="1"/>
</dbReference>
<dbReference type="PANTHER" id="PTHR43783:SF1">
    <property type="entry name" value="UDP-N-ACETYLGLUCOSAMINE 1-CARBOXYVINYLTRANSFERASE"/>
    <property type="match status" value="1"/>
</dbReference>
<dbReference type="Pfam" id="PF00275">
    <property type="entry name" value="EPSP_synthase"/>
    <property type="match status" value="1"/>
</dbReference>
<dbReference type="SUPFAM" id="SSF55205">
    <property type="entry name" value="EPT/RTPC-like"/>
    <property type="match status" value="1"/>
</dbReference>
<name>MURA_RHOCS</name>
<keyword id="KW-0131">Cell cycle</keyword>
<keyword id="KW-0132">Cell division</keyword>
<keyword id="KW-0133">Cell shape</keyword>
<keyword id="KW-0961">Cell wall biogenesis/degradation</keyword>
<keyword id="KW-0963">Cytoplasm</keyword>
<keyword id="KW-0573">Peptidoglycan synthesis</keyword>
<keyword id="KW-0670">Pyruvate</keyword>
<keyword id="KW-1185">Reference proteome</keyword>
<keyword id="KW-0808">Transferase</keyword>